<dbReference type="EC" id="1.8.4.11" evidence="3"/>
<dbReference type="EMBL" id="AJ133753">
    <property type="protein sequence ID" value="CAB43186.1"/>
    <property type="molecule type" value="mRNA"/>
</dbReference>
<dbReference type="EMBL" id="AJ133754">
    <property type="protein sequence ID" value="CAB43187.1"/>
    <property type="molecule type" value="Genomic_DNA"/>
</dbReference>
<dbReference type="EMBL" id="AL163912">
    <property type="protein sequence ID" value="CAB87936.1"/>
    <property type="molecule type" value="Genomic_DNA"/>
</dbReference>
<dbReference type="EMBL" id="CP002688">
    <property type="protein sequence ID" value="AED91162.1"/>
    <property type="molecule type" value="Genomic_DNA"/>
</dbReference>
<dbReference type="EMBL" id="AY044316">
    <property type="protein sequence ID" value="AAK73257.1"/>
    <property type="molecule type" value="mRNA"/>
</dbReference>
<dbReference type="EMBL" id="AY087046">
    <property type="protein sequence ID" value="AAM64607.1"/>
    <property type="molecule type" value="mRNA"/>
</dbReference>
<dbReference type="EMBL" id="AK118353">
    <property type="protein sequence ID" value="BAC42967.1"/>
    <property type="status" value="ALT_INIT"/>
    <property type="molecule type" value="mRNA"/>
</dbReference>
<dbReference type="PIR" id="T49886">
    <property type="entry name" value="T49886"/>
</dbReference>
<dbReference type="PIR" id="T52657">
    <property type="entry name" value="T52657"/>
</dbReference>
<dbReference type="RefSeq" id="NP_196364.1">
    <property type="nucleotide sequence ID" value="NM_120829.3"/>
</dbReference>
<dbReference type="SMR" id="Q9LY14"/>
<dbReference type="FunCoup" id="Q9LY14">
    <property type="interactions" value="2584"/>
</dbReference>
<dbReference type="STRING" id="3702.Q9LY14"/>
<dbReference type="MetOSite" id="Q9LY14"/>
<dbReference type="PaxDb" id="3702-AT5G07470.1"/>
<dbReference type="ProteomicsDB" id="239010"/>
<dbReference type="EnsemblPlants" id="AT5G07470.1">
    <property type="protein sequence ID" value="AT5G07470.1"/>
    <property type="gene ID" value="AT5G07470"/>
</dbReference>
<dbReference type="GeneID" id="830638"/>
<dbReference type="Gramene" id="AT5G07470.1">
    <property type="protein sequence ID" value="AT5G07470.1"/>
    <property type="gene ID" value="AT5G07470"/>
</dbReference>
<dbReference type="KEGG" id="ath:AT5G07470"/>
<dbReference type="Araport" id="AT5G07470"/>
<dbReference type="TAIR" id="AT5G07470">
    <property type="gene designation" value="PMSR3"/>
</dbReference>
<dbReference type="eggNOG" id="KOG1635">
    <property type="taxonomic scope" value="Eukaryota"/>
</dbReference>
<dbReference type="HOGENOM" id="CLU_031040_3_0_1"/>
<dbReference type="InParanoid" id="Q9LY14"/>
<dbReference type="OMA" id="QYRSIAF"/>
<dbReference type="PhylomeDB" id="Q9LY14"/>
<dbReference type="PRO" id="PR:Q9LY14"/>
<dbReference type="Proteomes" id="UP000006548">
    <property type="component" value="Chromosome 5"/>
</dbReference>
<dbReference type="ExpressionAtlas" id="Q9LY14">
    <property type="expression patterns" value="baseline and differential"/>
</dbReference>
<dbReference type="GO" id="GO:0005829">
    <property type="term" value="C:cytosol"/>
    <property type="evidence" value="ECO:0007005"/>
    <property type="project" value="TAIR"/>
</dbReference>
<dbReference type="GO" id="GO:0005886">
    <property type="term" value="C:plasma membrane"/>
    <property type="evidence" value="ECO:0007005"/>
    <property type="project" value="TAIR"/>
</dbReference>
<dbReference type="GO" id="GO:0033744">
    <property type="term" value="F:L-methionine:thioredoxin-disulfide S-oxidoreductase activity"/>
    <property type="evidence" value="ECO:0007669"/>
    <property type="project" value="RHEA"/>
</dbReference>
<dbReference type="GO" id="GO:0008113">
    <property type="term" value="F:peptide-methionine (S)-S-oxide reductase activity"/>
    <property type="evidence" value="ECO:0000314"/>
    <property type="project" value="UniProtKB"/>
</dbReference>
<dbReference type="GO" id="GO:0009416">
    <property type="term" value="P:response to light stimulus"/>
    <property type="evidence" value="ECO:0000270"/>
    <property type="project" value="UniProtKB"/>
</dbReference>
<dbReference type="FunFam" id="3.30.1060.10:FF:000002">
    <property type="entry name" value="Peptide methionine sulfoxide reductase"/>
    <property type="match status" value="1"/>
</dbReference>
<dbReference type="Gene3D" id="3.30.1060.10">
    <property type="entry name" value="Peptide methionine sulphoxide reductase MsrA"/>
    <property type="match status" value="1"/>
</dbReference>
<dbReference type="HAMAP" id="MF_01401">
    <property type="entry name" value="MsrA"/>
    <property type="match status" value="1"/>
</dbReference>
<dbReference type="InterPro" id="IPR002569">
    <property type="entry name" value="Met_Sox_Rdtase_MsrA_dom"/>
</dbReference>
<dbReference type="InterPro" id="IPR036509">
    <property type="entry name" value="Met_Sox_Rdtase_MsrA_sf"/>
</dbReference>
<dbReference type="InterPro" id="IPR050162">
    <property type="entry name" value="MsrA_MetSO_reductase"/>
</dbReference>
<dbReference type="NCBIfam" id="TIGR00401">
    <property type="entry name" value="msrA"/>
    <property type="match status" value="1"/>
</dbReference>
<dbReference type="PANTHER" id="PTHR42799">
    <property type="entry name" value="MITOCHONDRIAL PEPTIDE METHIONINE SULFOXIDE REDUCTASE"/>
    <property type="match status" value="1"/>
</dbReference>
<dbReference type="PANTHER" id="PTHR42799:SF9">
    <property type="entry name" value="PEPTIDE METHIONINE SULFOXIDE REDUCTASE A3"/>
    <property type="match status" value="1"/>
</dbReference>
<dbReference type="Pfam" id="PF01625">
    <property type="entry name" value="PMSR"/>
    <property type="match status" value="1"/>
</dbReference>
<dbReference type="SUPFAM" id="SSF55068">
    <property type="entry name" value="Peptide methionine sulfoxide reductase"/>
    <property type="match status" value="1"/>
</dbReference>
<reference key="1">
    <citation type="journal article" date="2000" name="Plant Physiol.">
        <title>Differential regulation of plastidial and cytosolic isoforms of peptide methionine sulfoxide reductase in Arabidopsis.</title>
        <authorList>
            <person name="Sadanandom A."/>
            <person name="Poghosyan Z."/>
            <person name="Fairbairn D.J."/>
            <person name="Murphy D.J."/>
        </authorList>
    </citation>
    <scope>NUCLEOTIDE SEQUENCE [GENOMIC DNA / MRNA]</scope>
    <scope>FUNCTION</scope>
    <scope>CATALYTIC ACTIVITY</scope>
    <scope>BIOPHYSICOCHEMICAL PROPERTIES</scope>
    <scope>TISSUE SPECIFICITY</scope>
    <scope>INDUCTION</scope>
    <source>
        <strain>cv. Columbia</strain>
    </source>
</reference>
<reference key="2">
    <citation type="journal article" date="2000" name="Nature">
        <title>Sequence and analysis of chromosome 5 of the plant Arabidopsis thaliana.</title>
        <authorList>
            <person name="Tabata S."/>
            <person name="Kaneko T."/>
            <person name="Nakamura Y."/>
            <person name="Kotani H."/>
            <person name="Kato T."/>
            <person name="Asamizu E."/>
            <person name="Miyajima N."/>
            <person name="Sasamoto S."/>
            <person name="Kimura T."/>
            <person name="Hosouchi T."/>
            <person name="Kawashima K."/>
            <person name="Kohara M."/>
            <person name="Matsumoto M."/>
            <person name="Matsuno A."/>
            <person name="Muraki A."/>
            <person name="Nakayama S."/>
            <person name="Nakazaki N."/>
            <person name="Naruo K."/>
            <person name="Okumura S."/>
            <person name="Shinpo S."/>
            <person name="Takeuchi C."/>
            <person name="Wada T."/>
            <person name="Watanabe A."/>
            <person name="Yamada M."/>
            <person name="Yasuda M."/>
            <person name="Sato S."/>
            <person name="de la Bastide M."/>
            <person name="Huang E."/>
            <person name="Spiegel L."/>
            <person name="Gnoj L."/>
            <person name="O'Shaughnessy A."/>
            <person name="Preston R."/>
            <person name="Habermann K."/>
            <person name="Murray J."/>
            <person name="Johnson D."/>
            <person name="Rohlfing T."/>
            <person name="Nelson J."/>
            <person name="Stoneking T."/>
            <person name="Pepin K."/>
            <person name="Spieth J."/>
            <person name="Sekhon M."/>
            <person name="Armstrong J."/>
            <person name="Becker M."/>
            <person name="Belter E."/>
            <person name="Cordum H."/>
            <person name="Cordes M."/>
            <person name="Courtney L."/>
            <person name="Courtney W."/>
            <person name="Dante M."/>
            <person name="Du H."/>
            <person name="Edwards J."/>
            <person name="Fryman J."/>
            <person name="Haakensen B."/>
            <person name="Lamar E."/>
            <person name="Latreille P."/>
            <person name="Leonard S."/>
            <person name="Meyer R."/>
            <person name="Mulvaney E."/>
            <person name="Ozersky P."/>
            <person name="Riley A."/>
            <person name="Strowmatt C."/>
            <person name="Wagner-McPherson C."/>
            <person name="Wollam A."/>
            <person name="Yoakum M."/>
            <person name="Bell M."/>
            <person name="Dedhia N."/>
            <person name="Parnell L."/>
            <person name="Shah R."/>
            <person name="Rodriguez M."/>
            <person name="Hoon See L."/>
            <person name="Vil D."/>
            <person name="Baker J."/>
            <person name="Kirchoff K."/>
            <person name="Toth K."/>
            <person name="King L."/>
            <person name="Bahret A."/>
            <person name="Miller B."/>
            <person name="Marra M.A."/>
            <person name="Martienssen R."/>
            <person name="McCombie W.R."/>
            <person name="Wilson R.K."/>
            <person name="Murphy G."/>
            <person name="Bancroft I."/>
            <person name="Volckaert G."/>
            <person name="Wambutt R."/>
            <person name="Duesterhoeft A."/>
            <person name="Stiekema W."/>
            <person name="Pohl T."/>
            <person name="Entian K.-D."/>
            <person name="Terryn N."/>
            <person name="Hartley N."/>
            <person name="Bent E."/>
            <person name="Johnson S."/>
            <person name="Langham S.-A."/>
            <person name="McCullagh B."/>
            <person name="Robben J."/>
            <person name="Grymonprez B."/>
            <person name="Zimmermann W."/>
            <person name="Ramsperger U."/>
            <person name="Wedler H."/>
            <person name="Balke K."/>
            <person name="Wedler E."/>
            <person name="Peters S."/>
            <person name="van Staveren M."/>
            <person name="Dirkse W."/>
            <person name="Mooijman P."/>
            <person name="Klein Lankhorst R."/>
            <person name="Weitzenegger T."/>
            <person name="Bothe G."/>
            <person name="Rose M."/>
            <person name="Hauf J."/>
            <person name="Berneiser S."/>
            <person name="Hempel S."/>
            <person name="Feldpausch M."/>
            <person name="Lamberth S."/>
            <person name="Villarroel R."/>
            <person name="Gielen J."/>
            <person name="Ardiles W."/>
            <person name="Bents O."/>
            <person name="Lemcke K."/>
            <person name="Kolesov G."/>
            <person name="Mayer K.F.X."/>
            <person name="Rudd S."/>
            <person name="Schoof H."/>
            <person name="Schueller C."/>
            <person name="Zaccaria P."/>
            <person name="Mewes H.-W."/>
            <person name="Bevan M."/>
            <person name="Fransz P.F."/>
        </authorList>
    </citation>
    <scope>NUCLEOTIDE SEQUENCE [LARGE SCALE GENOMIC DNA]</scope>
    <source>
        <strain>cv. Columbia</strain>
    </source>
</reference>
<reference key="3">
    <citation type="journal article" date="2017" name="Plant J.">
        <title>Araport11: a complete reannotation of the Arabidopsis thaliana reference genome.</title>
        <authorList>
            <person name="Cheng C.Y."/>
            <person name="Krishnakumar V."/>
            <person name="Chan A.P."/>
            <person name="Thibaud-Nissen F."/>
            <person name="Schobel S."/>
            <person name="Town C.D."/>
        </authorList>
    </citation>
    <scope>GENOME REANNOTATION</scope>
    <source>
        <strain>cv. Columbia</strain>
    </source>
</reference>
<reference key="4">
    <citation type="journal article" date="2003" name="Science">
        <title>Empirical analysis of transcriptional activity in the Arabidopsis genome.</title>
        <authorList>
            <person name="Yamada K."/>
            <person name="Lim J."/>
            <person name="Dale J.M."/>
            <person name="Chen H."/>
            <person name="Shinn P."/>
            <person name="Palm C.J."/>
            <person name="Southwick A.M."/>
            <person name="Wu H.C."/>
            <person name="Kim C.J."/>
            <person name="Nguyen M."/>
            <person name="Pham P.K."/>
            <person name="Cheuk R.F."/>
            <person name="Karlin-Newmann G."/>
            <person name="Liu S.X."/>
            <person name="Lam B."/>
            <person name="Sakano H."/>
            <person name="Wu T."/>
            <person name="Yu G."/>
            <person name="Miranda M."/>
            <person name="Quach H.L."/>
            <person name="Tripp M."/>
            <person name="Chang C.H."/>
            <person name="Lee J.M."/>
            <person name="Toriumi M.J."/>
            <person name="Chan M.M."/>
            <person name="Tang C.C."/>
            <person name="Onodera C.S."/>
            <person name="Deng J.M."/>
            <person name="Akiyama K."/>
            <person name="Ansari Y."/>
            <person name="Arakawa T."/>
            <person name="Banh J."/>
            <person name="Banno F."/>
            <person name="Bowser L."/>
            <person name="Brooks S.Y."/>
            <person name="Carninci P."/>
            <person name="Chao Q."/>
            <person name="Choy N."/>
            <person name="Enju A."/>
            <person name="Goldsmith A.D."/>
            <person name="Gurjal M."/>
            <person name="Hansen N.F."/>
            <person name="Hayashizaki Y."/>
            <person name="Johnson-Hopson C."/>
            <person name="Hsuan V.W."/>
            <person name="Iida K."/>
            <person name="Karnes M."/>
            <person name="Khan S."/>
            <person name="Koesema E."/>
            <person name="Ishida J."/>
            <person name="Jiang P.X."/>
            <person name="Jones T."/>
            <person name="Kawai J."/>
            <person name="Kamiya A."/>
            <person name="Meyers C."/>
            <person name="Nakajima M."/>
            <person name="Narusaka M."/>
            <person name="Seki M."/>
            <person name="Sakurai T."/>
            <person name="Satou M."/>
            <person name="Tamse R."/>
            <person name="Vaysberg M."/>
            <person name="Wallender E.K."/>
            <person name="Wong C."/>
            <person name="Yamamura Y."/>
            <person name="Yuan S."/>
            <person name="Shinozaki K."/>
            <person name="Davis R.W."/>
            <person name="Theologis A."/>
            <person name="Ecker J.R."/>
        </authorList>
    </citation>
    <scope>NUCLEOTIDE SEQUENCE [LARGE SCALE MRNA]</scope>
    <source>
        <strain>cv. Columbia</strain>
    </source>
</reference>
<reference key="5">
    <citation type="submission" date="2002-03" db="EMBL/GenBank/DDBJ databases">
        <title>Full-length cDNA from Arabidopsis thaliana.</title>
        <authorList>
            <person name="Brover V.V."/>
            <person name="Troukhan M.E."/>
            <person name="Alexandrov N.A."/>
            <person name="Lu Y.-P."/>
            <person name="Flavell R.B."/>
            <person name="Feldmann K.A."/>
        </authorList>
    </citation>
    <scope>NUCLEOTIDE SEQUENCE [LARGE SCALE MRNA]</scope>
</reference>
<reference key="6">
    <citation type="journal article" date="2002" name="Science">
        <title>Functional annotation of a full-length Arabidopsis cDNA collection.</title>
        <authorList>
            <person name="Seki M."/>
            <person name="Narusaka M."/>
            <person name="Kamiya A."/>
            <person name="Ishida J."/>
            <person name="Satou M."/>
            <person name="Sakurai T."/>
            <person name="Nakajima M."/>
            <person name="Enju A."/>
            <person name="Akiyama K."/>
            <person name="Oono Y."/>
            <person name="Muramatsu M."/>
            <person name="Hayashizaki Y."/>
            <person name="Kawai J."/>
            <person name="Carninci P."/>
            <person name="Itoh M."/>
            <person name="Ishii Y."/>
            <person name="Arakawa T."/>
            <person name="Shibata K."/>
            <person name="Shinagawa A."/>
            <person name="Shinozaki K."/>
        </authorList>
    </citation>
    <scope>NUCLEOTIDE SEQUENCE [LARGE SCALE MRNA] OF 6-202</scope>
    <source>
        <strain>cv. Columbia</strain>
    </source>
</reference>
<reference key="7">
    <citation type="journal article" date="2006" name="Photosyn. Res.">
        <title>Plant methionine sulfoxide reductase A and B multigenic families.</title>
        <authorList>
            <person name="Rouhier N."/>
            <person name="Vieira Dos Santos C."/>
            <person name="Tarrago L."/>
            <person name="Rey P."/>
        </authorList>
    </citation>
    <scope>GENE FAMILY</scope>
    <scope>NOMENCLATURE</scope>
</reference>
<protein>
    <recommendedName>
        <fullName>Peptide methionine sulfoxide reductase A3</fullName>
        <shortName>AtMSRA3</shortName>
        <ecNumber evidence="3">1.8.4.11</ecNumber>
    </recommendedName>
    <alternativeName>
        <fullName>Peptide-methionine (S)-S-oxide reductase</fullName>
        <shortName>Peptide Met(O) reductase</shortName>
    </alternativeName>
    <alternativeName>
        <fullName>Protein-methionine-S-oxide reductase</fullName>
    </alternativeName>
</protein>
<keyword id="KW-0963">Cytoplasm</keyword>
<keyword id="KW-0560">Oxidoreductase</keyword>
<keyword id="KW-0597">Phosphoprotein</keyword>
<keyword id="KW-1185">Reference proteome</keyword>
<proteinExistence type="evidence at protein level"/>
<accession>Q9LY14</accession>
<accession>Q8GX95</accession>
<accession>Q8LBR1</accession>
<accession>Q9S813</accession>
<organism>
    <name type="scientific">Arabidopsis thaliana</name>
    <name type="common">Mouse-ear cress</name>
    <dbReference type="NCBI Taxonomy" id="3702"/>
    <lineage>
        <taxon>Eukaryota</taxon>
        <taxon>Viridiplantae</taxon>
        <taxon>Streptophyta</taxon>
        <taxon>Embryophyta</taxon>
        <taxon>Tracheophyta</taxon>
        <taxon>Spermatophyta</taxon>
        <taxon>Magnoliopsida</taxon>
        <taxon>eudicotyledons</taxon>
        <taxon>Gunneridae</taxon>
        <taxon>Pentapetalae</taxon>
        <taxon>rosids</taxon>
        <taxon>malvids</taxon>
        <taxon>Brassicales</taxon>
        <taxon>Brassicaceae</taxon>
        <taxon>Camelineae</taxon>
        <taxon>Arabidopsis</taxon>
    </lineage>
</organism>
<name>MSRA3_ARATH</name>
<feature type="chain" id="PRO_0000395513" description="Peptide methionine sulfoxide reductase A3">
    <location>
        <begin position="1"/>
        <end position="202"/>
    </location>
</feature>
<feature type="region of interest" description="Disordered" evidence="2">
    <location>
        <begin position="1"/>
        <end position="34"/>
    </location>
</feature>
<feature type="modified residue" description="Phosphoserine" evidence="1">
    <location>
        <position position="189"/>
    </location>
</feature>
<feature type="sequence conflict" description="In Ref. 5; AAM64607." evidence="4" ref="5">
    <original>D</original>
    <variation>H</variation>
    <location>
        <position position="71"/>
    </location>
</feature>
<feature type="sequence conflict" description="In Ref. 1; CAB43186/CAB43187." evidence="4" ref="1">
    <original>G</original>
    <variation>V</variation>
    <location>
        <position position="120"/>
    </location>
</feature>
<feature type="sequence conflict" description="In Ref. 1; CAB43186/CAB43187." evidence="4" ref="1">
    <original>Q</original>
    <variation>H</variation>
    <location>
        <position position="126"/>
    </location>
</feature>
<feature type="sequence conflict" description="In Ref. 1; CAB43186/CAB43187." evidence="4" ref="1">
    <original>R</original>
    <variation>RHQ</variation>
    <location>
        <position position="148"/>
    </location>
</feature>
<gene>
    <name type="primary">MSRA3</name>
    <name type="synonym">MSR</name>
    <name type="synonym">PMSR3</name>
    <name type="ordered locus">At5g07470</name>
    <name type="ORF">T2I1.180</name>
</gene>
<sequence>MNILNRLGLGSSGQTNMDPSPIAQGNDDDTPAPGNQFAQFGAGCFWGVELAFQRVPGVTQTEAGYTQGTVDNPSYGDVCSGTTGHSEVVRVQYDLNDCTYESLLDLFWSRHDPTTLNRQGNDVGTQYRSGIYFYTPEQEKLARESLERHQQQMERKIMTEILPAKKFYRAEEHHQQYLSKGGRFGQGQSTAKGCNDPIRCYG</sequence>
<evidence type="ECO:0000250" key="1">
    <source>
        <dbReference type="UniProtKB" id="Q9LY15"/>
    </source>
</evidence>
<evidence type="ECO:0000256" key="2">
    <source>
        <dbReference type="SAM" id="MobiDB-lite"/>
    </source>
</evidence>
<evidence type="ECO:0000269" key="3">
    <source>
    </source>
</evidence>
<evidence type="ECO:0000305" key="4"/>
<evidence type="ECO:0000305" key="5">
    <source>
    </source>
</evidence>
<comment type="function">
    <text evidence="3">Catalyzes the reduction of methionine sulfoxide (MetSO) to methionine in proteins. Plays a protective role against oxidative stress by restoring activity to proteins that have been inactivated by methionine oxidation. May prevent cellular oxidative damage due to light exposure. MSRA family specifically reduces the MetSO S-enantiomer.</text>
</comment>
<comment type="catalytic activity">
    <reaction evidence="3">
        <text>L-methionyl-[protein] + [thioredoxin]-disulfide + H2O = L-methionyl-(S)-S-oxide-[protein] + [thioredoxin]-dithiol</text>
        <dbReference type="Rhea" id="RHEA:14217"/>
        <dbReference type="Rhea" id="RHEA-COMP:10698"/>
        <dbReference type="Rhea" id="RHEA-COMP:10700"/>
        <dbReference type="Rhea" id="RHEA-COMP:12313"/>
        <dbReference type="Rhea" id="RHEA-COMP:12315"/>
        <dbReference type="ChEBI" id="CHEBI:15377"/>
        <dbReference type="ChEBI" id="CHEBI:16044"/>
        <dbReference type="ChEBI" id="CHEBI:29950"/>
        <dbReference type="ChEBI" id="CHEBI:44120"/>
        <dbReference type="ChEBI" id="CHEBI:50058"/>
        <dbReference type="EC" id="1.8.4.11"/>
    </reaction>
    <physiologicalReaction direction="right-to-left" evidence="5">
        <dbReference type="Rhea" id="RHEA:14219"/>
    </physiologicalReaction>
</comment>
<comment type="catalytic activity">
    <reaction evidence="3">
        <text>[thioredoxin]-disulfide + L-methionine + H2O = L-methionine (S)-S-oxide + [thioredoxin]-dithiol</text>
        <dbReference type="Rhea" id="RHEA:19993"/>
        <dbReference type="Rhea" id="RHEA-COMP:10698"/>
        <dbReference type="Rhea" id="RHEA-COMP:10700"/>
        <dbReference type="ChEBI" id="CHEBI:15377"/>
        <dbReference type="ChEBI" id="CHEBI:29950"/>
        <dbReference type="ChEBI" id="CHEBI:50058"/>
        <dbReference type="ChEBI" id="CHEBI:57844"/>
        <dbReference type="ChEBI" id="CHEBI:58772"/>
        <dbReference type="EC" id="1.8.4.11"/>
    </reaction>
    <physiologicalReaction direction="right-to-left" evidence="5">
        <dbReference type="Rhea" id="RHEA:19995"/>
    </physiologicalReaction>
</comment>
<comment type="biophysicochemical properties">
    <phDependence>
        <text evidence="3">Optimum pH is 7.0.</text>
    </phDependence>
</comment>
<comment type="subcellular location">
    <subcellularLocation>
        <location>Cytoplasm</location>
        <location>Cytosol</location>
    </subcellularLocation>
</comment>
<comment type="tissue specificity">
    <text evidence="3">Expressed in rosette and cauline leaves, and at lower levels in roots, stems and flowers (at protein level).</text>
</comment>
<comment type="induction">
    <text evidence="3">By light in etiolated seedlings (at protein level).</text>
</comment>
<comment type="similarity">
    <text evidence="4">Belongs to the MsrA Met sulfoxide reductase family.</text>
</comment>
<comment type="sequence caution" evidence="4">
    <conflict type="erroneous initiation">
        <sequence resource="EMBL-CDS" id="BAC42967"/>
    </conflict>
    <text>Truncated N-terminus.</text>
</comment>